<keyword id="KW-0067">ATP-binding</keyword>
<keyword id="KW-0460">Magnesium</keyword>
<keyword id="KW-0547">Nucleotide-binding</keyword>
<keyword id="KW-0808">Transferase</keyword>
<keyword id="KW-0819">tRNA processing</keyword>
<accession>Q92C59</accession>
<sequence length="305" mass="34692">MSKIPVIVIVGPTAVGKTSLSITLAKNFDGEIISGDSMQVYRGLDIGTAKITPEEMDGIKHYLIDVTDPAVPFTAAKFQAETRGLIESIHNRGKLPIIVGGTGLYIQSVFYDYGFGNASEDKAYRRELDQLDKTTLWQMLDQLDPKSAELIHENNKRRVIRALEVIHLTGKPFSEYQVHHTLNEAYQPLFLGLDLDRELLYERINRRVELMFEEGLVSEASKLYDEHLVDVPAIRGIGYKELFTYFDGNSSLEEAKELIQKNSRHFAKRQLTWFRNRMDIDWIQAGVSTTDTEAMEKVKTFLASK</sequence>
<evidence type="ECO:0000255" key="1">
    <source>
        <dbReference type="HAMAP-Rule" id="MF_00185"/>
    </source>
</evidence>
<dbReference type="EC" id="2.5.1.75" evidence="1"/>
<dbReference type="EMBL" id="AL596168">
    <property type="protein sequence ID" value="CAC96563.1"/>
    <property type="molecule type" value="Genomic_DNA"/>
</dbReference>
<dbReference type="PIR" id="AC1599">
    <property type="entry name" value="AC1599"/>
</dbReference>
<dbReference type="RefSeq" id="WP_010990931.1">
    <property type="nucleotide sequence ID" value="NC_003212.1"/>
</dbReference>
<dbReference type="SMR" id="Q92C59"/>
<dbReference type="STRING" id="272626.gene:17565663"/>
<dbReference type="KEGG" id="lin:miaA"/>
<dbReference type="eggNOG" id="COG0324">
    <property type="taxonomic scope" value="Bacteria"/>
</dbReference>
<dbReference type="HOGENOM" id="CLU_032616_0_1_9"/>
<dbReference type="OrthoDB" id="9776390at2"/>
<dbReference type="Proteomes" id="UP000002513">
    <property type="component" value="Chromosome"/>
</dbReference>
<dbReference type="GO" id="GO:0005524">
    <property type="term" value="F:ATP binding"/>
    <property type="evidence" value="ECO:0007669"/>
    <property type="project" value="UniProtKB-UniRule"/>
</dbReference>
<dbReference type="GO" id="GO:0052381">
    <property type="term" value="F:tRNA dimethylallyltransferase activity"/>
    <property type="evidence" value="ECO:0007669"/>
    <property type="project" value="UniProtKB-UniRule"/>
</dbReference>
<dbReference type="GO" id="GO:0006400">
    <property type="term" value="P:tRNA modification"/>
    <property type="evidence" value="ECO:0007669"/>
    <property type="project" value="TreeGrafter"/>
</dbReference>
<dbReference type="Gene3D" id="1.10.20.140">
    <property type="match status" value="1"/>
</dbReference>
<dbReference type="Gene3D" id="3.40.50.300">
    <property type="entry name" value="P-loop containing nucleotide triphosphate hydrolases"/>
    <property type="match status" value="1"/>
</dbReference>
<dbReference type="HAMAP" id="MF_00185">
    <property type="entry name" value="IPP_trans"/>
    <property type="match status" value="1"/>
</dbReference>
<dbReference type="InterPro" id="IPR039657">
    <property type="entry name" value="Dimethylallyltransferase"/>
</dbReference>
<dbReference type="InterPro" id="IPR018022">
    <property type="entry name" value="IPT"/>
</dbReference>
<dbReference type="InterPro" id="IPR027417">
    <property type="entry name" value="P-loop_NTPase"/>
</dbReference>
<dbReference type="NCBIfam" id="TIGR00174">
    <property type="entry name" value="miaA"/>
    <property type="match status" value="1"/>
</dbReference>
<dbReference type="PANTHER" id="PTHR11088">
    <property type="entry name" value="TRNA DIMETHYLALLYLTRANSFERASE"/>
    <property type="match status" value="1"/>
</dbReference>
<dbReference type="PANTHER" id="PTHR11088:SF60">
    <property type="entry name" value="TRNA DIMETHYLALLYLTRANSFERASE"/>
    <property type="match status" value="1"/>
</dbReference>
<dbReference type="Pfam" id="PF01715">
    <property type="entry name" value="IPPT"/>
    <property type="match status" value="1"/>
</dbReference>
<dbReference type="SUPFAM" id="SSF52540">
    <property type="entry name" value="P-loop containing nucleoside triphosphate hydrolases"/>
    <property type="match status" value="2"/>
</dbReference>
<feature type="chain" id="PRO_0000163934" description="tRNA dimethylallyltransferase">
    <location>
        <begin position="1"/>
        <end position="305"/>
    </location>
</feature>
<feature type="region of interest" description="Interaction with substrate tRNA" evidence="1">
    <location>
        <begin position="36"/>
        <end position="39"/>
    </location>
</feature>
<feature type="binding site" evidence="1">
    <location>
        <begin position="11"/>
        <end position="18"/>
    </location>
    <ligand>
        <name>ATP</name>
        <dbReference type="ChEBI" id="CHEBI:30616"/>
    </ligand>
</feature>
<feature type="binding site" evidence="1">
    <location>
        <begin position="13"/>
        <end position="18"/>
    </location>
    <ligand>
        <name>substrate</name>
    </ligand>
</feature>
<feature type="site" description="Interaction with substrate tRNA" evidence="1">
    <location>
        <position position="102"/>
    </location>
</feature>
<proteinExistence type="inferred from homology"/>
<name>MIAA_LISIN</name>
<protein>
    <recommendedName>
        <fullName evidence="1">tRNA dimethylallyltransferase</fullName>
        <ecNumber evidence="1">2.5.1.75</ecNumber>
    </recommendedName>
    <alternativeName>
        <fullName evidence="1">Dimethylallyl diphosphate:tRNA dimethylallyltransferase</fullName>
        <shortName evidence="1">DMAPP:tRNA dimethylallyltransferase</shortName>
        <shortName evidence="1">DMATase</shortName>
    </alternativeName>
    <alternativeName>
        <fullName evidence="1">Isopentenyl-diphosphate:tRNA isopentenyltransferase</fullName>
        <shortName evidence="1">IPP transferase</shortName>
        <shortName evidence="1">IPPT</shortName>
        <shortName evidence="1">IPTase</shortName>
    </alternativeName>
</protein>
<organism>
    <name type="scientific">Listeria innocua serovar 6a (strain ATCC BAA-680 / CLIP 11262)</name>
    <dbReference type="NCBI Taxonomy" id="272626"/>
    <lineage>
        <taxon>Bacteria</taxon>
        <taxon>Bacillati</taxon>
        <taxon>Bacillota</taxon>
        <taxon>Bacilli</taxon>
        <taxon>Bacillales</taxon>
        <taxon>Listeriaceae</taxon>
        <taxon>Listeria</taxon>
    </lineage>
</organism>
<comment type="function">
    <text evidence="1">Catalyzes the transfer of a dimethylallyl group onto the adenine at position 37 in tRNAs that read codons beginning with uridine, leading to the formation of N6-(dimethylallyl)adenosine (i(6)A).</text>
</comment>
<comment type="catalytic activity">
    <reaction evidence="1">
        <text>adenosine(37) in tRNA + dimethylallyl diphosphate = N(6)-dimethylallyladenosine(37) in tRNA + diphosphate</text>
        <dbReference type="Rhea" id="RHEA:26482"/>
        <dbReference type="Rhea" id="RHEA-COMP:10162"/>
        <dbReference type="Rhea" id="RHEA-COMP:10375"/>
        <dbReference type="ChEBI" id="CHEBI:33019"/>
        <dbReference type="ChEBI" id="CHEBI:57623"/>
        <dbReference type="ChEBI" id="CHEBI:74411"/>
        <dbReference type="ChEBI" id="CHEBI:74415"/>
        <dbReference type="EC" id="2.5.1.75"/>
    </reaction>
</comment>
<comment type="cofactor">
    <cofactor evidence="1">
        <name>Mg(2+)</name>
        <dbReference type="ChEBI" id="CHEBI:18420"/>
    </cofactor>
</comment>
<comment type="subunit">
    <text evidence="1">Monomer.</text>
</comment>
<comment type="similarity">
    <text evidence="1">Belongs to the IPP transferase family.</text>
</comment>
<reference key="1">
    <citation type="journal article" date="2001" name="Science">
        <title>Comparative genomics of Listeria species.</title>
        <authorList>
            <person name="Glaser P."/>
            <person name="Frangeul L."/>
            <person name="Buchrieser C."/>
            <person name="Rusniok C."/>
            <person name="Amend A."/>
            <person name="Baquero F."/>
            <person name="Berche P."/>
            <person name="Bloecker H."/>
            <person name="Brandt P."/>
            <person name="Chakraborty T."/>
            <person name="Charbit A."/>
            <person name="Chetouani F."/>
            <person name="Couve E."/>
            <person name="de Daruvar A."/>
            <person name="Dehoux P."/>
            <person name="Domann E."/>
            <person name="Dominguez-Bernal G."/>
            <person name="Duchaud E."/>
            <person name="Durant L."/>
            <person name="Dussurget O."/>
            <person name="Entian K.-D."/>
            <person name="Fsihi H."/>
            <person name="Garcia-del Portillo F."/>
            <person name="Garrido P."/>
            <person name="Gautier L."/>
            <person name="Goebel W."/>
            <person name="Gomez-Lopez N."/>
            <person name="Hain T."/>
            <person name="Hauf J."/>
            <person name="Jackson D."/>
            <person name="Jones L.-M."/>
            <person name="Kaerst U."/>
            <person name="Kreft J."/>
            <person name="Kuhn M."/>
            <person name="Kunst F."/>
            <person name="Kurapkat G."/>
            <person name="Madueno E."/>
            <person name="Maitournam A."/>
            <person name="Mata Vicente J."/>
            <person name="Ng E."/>
            <person name="Nedjari H."/>
            <person name="Nordsiek G."/>
            <person name="Novella S."/>
            <person name="de Pablos B."/>
            <person name="Perez-Diaz J.-C."/>
            <person name="Purcell R."/>
            <person name="Remmel B."/>
            <person name="Rose M."/>
            <person name="Schlueter T."/>
            <person name="Simoes N."/>
            <person name="Tierrez A."/>
            <person name="Vazquez-Boland J.-A."/>
            <person name="Voss H."/>
            <person name="Wehland J."/>
            <person name="Cossart P."/>
        </authorList>
    </citation>
    <scope>NUCLEOTIDE SEQUENCE [LARGE SCALE GENOMIC DNA]</scope>
    <source>
        <strain>ATCC BAA-680 / CLIP 11262</strain>
    </source>
</reference>
<gene>
    <name evidence="1" type="primary">miaA</name>
    <name type="ordered locus">lin1332</name>
</gene>